<sequence>MDVCAASFPLLVLNSVHSTTGARAQFTPAAVEARVKVPVTATVRFCVSRRNRCVHGNIDCHKFACNPTSEDELEPDNYTVNAEFFKTKVAAKKELRKTRHSAASDSDTDDDEAEFVKQKLRRHFDGEDSCDVELYSCRMSVFAIDDMFEHDVYNALNRGVDYRTACKWDTRQTDVFEFRENFCSLDTITDIVFNWLSVTSNDNFTILFKNSSNALWKTLANNNLITVTVNKNETPVMLTSNEFPEATLFEVLDKMRQIVLAQLYHRVDCDANEAVATFAFDLFLK</sequence>
<reference key="1">
    <citation type="journal article" date="1996" name="Virology">
        <title>Characterization of a highly conserved baculovirus structural protein that is specific for occlusion-derived virions.</title>
        <authorList>
            <person name="Theilmann D.A."/>
            <person name="Chantler J.K."/>
            <person name="Stewart S."/>
            <person name="Flipsen H.T.M."/>
            <person name="Vlak J.M."/>
            <person name="Crook N.E."/>
        </authorList>
    </citation>
    <scope>NUCLEOTIDE SEQUENCE [GENOMIC DNA]</scope>
</reference>
<reference key="2">
    <citation type="journal article" date="1997" name="Virology">
        <title>The sequence of the Orgyia pseudotsugata multinucleocapsid nuclear polyhedrosis virus genome.</title>
        <authorList>
            <person name="Ahrens C.H."/>
            <person name="Russell R.R."/>
            <person name="Funk C.J."/>
            <person name="Evans J."/>
            <person name="Harwood S."/>
            <person name="Rohrmann G.F."/>
        </authorList>
    </citation>
    <scope>NUCLEOTIDE SEQUENCE [LARGE SCALE GENOMIC DNA]</scope>
</reference>
<name>OPEP3_NPVOP</name>
<protein>
    <recommendedName>
        <fullName>OPEP-3 protein</fullName>
    </recommendedName>
    <alternativeName>
        <fullName>P32</fullName>
    </alternativeName>
</protein>
<organism>
    <name type="scientific">Orgyia pseudotsugata multicapsid polyhedrosis virus</name>
    <name type="common">OpMNPV</name>
    <dbReference type="NCBI Taxonomy" id="262177"/>
    <lineage>
        <taxon>Viruses</taxon>
        <taxon>Viruses incertae sedis</taxon>
        <taxon>Naldaviricetes</taxon>
        <taxon>Lefavirales</taxon>
        <taxon>Baculoviridae</taxon>
        <taxon>Alphabaculovirus</taxon>
        <taxon>Alphabaculovirus orpseudotsugatae</taxon>
    </lineage>
</organism>
<feature type="chain" id="PRO_0000132934" description="OPEP-3 protein">
    <location>
        <begin position="1"/>
        <end position="285"/>
    </location>
</feature>
<organismHost>
    <name type="scientific">Orgyia pseudotsugata</name>
    <name type="common">Douglas-fir tussock moth</name>
    <dbReference type="NCBI Taxonomy" id="33414"/>
</organismHost>
<keyword id="KW-1185">Reference proteome</keyword>
<dbReference type="EMBL" id="U72650">
    <property type="protein sequence ID" value="AAB37303.1"/>
    <property type="molecule type" value="Genomic_DNA"/>
</dbReference>
<dbReference type="EMBL" id="U75930">
    <property type="protein sequence ID" value="AAC59146.1"/>
    <property type="molecule type" value="Genomic_DNA"/>
</dbReference>
<dbReference type="RefSeq" id="NP_046303.1">
    <property type="nucleotide sequence ID" value="NC_001875.2"/>
</dbReference>
<dbReference type="KEGG" id="vg:911966"/>
<dbReference type="OrthoDB" id="32577at10239"/>
<dbReference type="Proteomes" id="UP000009248">
    <property type="component" value="Genome"/>
</dbReference>
<proteinExistence type="predicted"/>
<gene>
    <name type="primary">OPEP-3</name>
    <name type="ORF">ORF147</name>
</gene>
<accession>P90212</accession>
<accession>O12560</accession>